<organism>
    <name type="scientific">Mycoplasma pneumoniae (strain ATCC 29342 / M129 / Subtype 1)</name>
    <name type="common">Mycoplasmoides pneumoniae</name>
    <dbReference type="NCBI Taxonomy" id="272634"/>
    <lineage>
        <taxon>Bacteria</taxon>
        <taxon>Bacillati</taxon>
        <taxon>Mycoplasmatota</taxon>
        <taxon>Mycoplasmoidales</taxon>
        <taxon>Mycoplasmoidaceae</taxon>
        <taxon>Mycoplasmoides</taxon>
    </lineage>
</organism>
<sequence length="339" mass="38138">MKDTEKKTEKELVWDECVDILENVKANSFKATLEYYLASDKKTKKAKPAKVKKVKEPKAKAVKPEQVKPTKTTKAPKPKKPKKQGGLISQWKEKLEAPYRTPYVEQKQGMVISIDKMWKHVHGEDSKEQIAILSDVSLEIGYGEIVIILGPSGSGKTTLLNLIGGYDSISLGSCVVANCPLEKCTTEQLLTYRKLNLGYVYQRYNLIELLSAYDNIAISQNLIPKEQRHLDIEELAAKLDIKEILYKFPYEMSGGQKQRVAIARAIIKEPRLLLCDEPTGALDSNSAENIIALLQAINKEYKQTILMVTHDETLTRIANRIIKISDGKIVSNELVRPLS</sequence>
<evidence type="ECO:0000255" key="1">
    <source>
        <dbReference type="PROSITE-ProRule" id="PRU00434"/>
    </source>
</evidence>
<evidence type="ECO:0000256" key="2">
    <source>
        <dbReference type="SAM" id="MobiDB-lite"/>
    </source>
</evidence>
<evidence type="ECO:0000305" key="3"/>
<keyword id="KW-0067">ATP-binding</keyword>
<keyword id="KW-0547">Nucleotide-binding</keyword>
<keyword id="KW-1185">Reference proteome</keyword>
<keyword id="KW-0813">Transport</keyword>
<dbReference type="EMBL" id="U00089">
    <property type="protein sequence ID" value="AAB95807.1"/>
    <property type="molecule type" value="Genomic_DNA"/>
</dbReference>
<dbReference type="PIR" id="S73485">
    <property type="entry name" value="S73485"/>
</dbReference>
<dbReference type="RefSeq" id="NP_110372.1">
    <property type="nucleotide sequence ID" value="NC_000912.1"/>
</dbReference>
<dbReference type="RefSeq" id="WP_010875040.1">
    <property type="nucleotide sequence ID" value="NZ_OU342337.1"/>
</dbReference>
<dbReference type="SMR" id="P75110"/>
<dbReference type="IntAct" id="P75110">
    <property type="interactions" value="2"/>
</dbReference>
<dbReference type="STRING" id="272634.MPN_683"/>
<dbReference type="EnsemblBacteria" id="AAB95807">
    <property type="protein sequence ID" value="AAB95807"/>
    <property type="gene ID" value="MPN_683"/>
</dbReference>
<dbReference type="KEGG" id="mpn:MPN_683"/>
<dbReference type="PATRIC" id="fig|272634.6.peg.750"/>
<dbReference type="HOGENOM" id="CLU_000604_1_22_14"/>
<dbReference type="OrthoDB" id="9802264at2"/>
<dbReference type="BioCyc" id="MPNE272634:G1GJ3-1092-MONOMER"/>
<dbReference type="Proteomes" id="UP000000808">
    <property type="component" value="Chromosome"/>
</dbReference>
<dbReference type="GO" id="GO:0005524">
    <property type="term" value="F:ATP binding"/>
    <property type="evidence" value="ECO:0007669"/>
    <property type="project" value="UniProtKB-KW"/>
</dbReference>
<dbReference type="GO" id="GO:0016887">
    <property type="term" value="F:ATP hydrolysis activity"/>
    <property type="evidence" value="ECO:0007669"/>
    <property type="project" value="InterPro"/>
</dbReference>
<dbReference type="CDD" id="cd03255">
    <property type="entry name" value="ABC_MJ0796_LolCDE_FtsE"/>
    <property type="match status" value="1"/>
</dbReference>
<dbReference type="Gene3D" id="3.40.50.300">
    <property type="entry name" value="P-loop containing nucleotide triphosphate hydrolases"/>
    <property type="match status" value="1"/>
</dbReference>
<dbReference type="InterPro" id="IPR003593">
    <property type="entry name" value="AAA+_ATPase"/>
</dbReference>
<dbReference type="InterPro" id="IPR003439">
    <property type="entry name" value="ABC_transporter-like_ATP-bd"/>
</dbReference>
<dbReference type="InterPro" id="IPR017871">
    <property type="entry name" value="ABC_transporter-like_CS"/>
</dbReference>
<dbReference type="InterPro" id="IPR017911">
    <property type="entry name" value="MacB-like_ATP-bd"/>
</dbReference>
<dbReference type="InterPro" id="IPR027417">
    <property type="entry name" value="P-loop_NTPase"/>
</dbReference>
<dbReference type="PANTHER" id="PTHR42798:SF2">
    <property type="entry name" value="ABC TRANSPORTER ATP-BINDING PROTEIN MG467-RELATED"/>
    <property type="match status" value="1"/>
</dbReference>
<dbReference type="PANTHER" id="PTHR42798">
    <property type="entry name" value="LIPOPROTEIN-RELEASING SYSTEM ATP-BINDING PROTEIN LOLD"/>
    <property type="match status" value="1"/>
</dbReference>
<dbReference type="Pfam" id="PF00005">
    <property type="entry name" value="ABC_tran"/>
    <property type="match status" value="1"/>
</dbReference>
<dbReference type="SMART" id="SM00382">
    <property type="entry name" value="AAA"/>
    <property type="match status" value="1"/>
</dbReference>
<dbReference type="SUPFAM" id="SSF52540">
    <property type="entry name" value="P-loop containing nucleoside triphosphate hydrolases"/>
    <property type="match status" value="1"/>
</dbReference>
<dbReference type="PROSITE" id="PS00211">
    <property type="entry name" value="ABC_TRANSPORTER_1"/>
    <property type="match status" value="1"/>
</dbReference>
<dbReference type="PROSITE" id="PS50893">
    <property type="entry name" value="ABC_TRANSPORTER_2"/>
    <property type="match status" value="1"/>
</dbReference>
<gene>
    <name type="ordered locus">MPN_683</name>
    <name type="ORF">K05_orf339</name>
    <name type="ORF">MP159</name>
</gene>
<feature type="chain" id="PRO_0000093250" description="Putative ABC transporter ATP-binding protein MG467 homolog">
    <location>
        <begin position="1"/>
        <end position="339"/>
    </location>
</feature>
<feature type="domain" description="ABC transporter" evidence="1">
    <location>
        <begin position="112"/>
        <end position="338"/>
    </location>
</feature>
<feature type="region of interest" description="Disordered" evidence="2">
    <location>
        <begin position="41"/>
        <end position="87"/>
    </location>
</feature>
<feature type="compositionally biased region" description="Basic residues" evidence="2">
    <location>
        <begin position="42"/>
        <end position="53"/>
    </location>
</feature>
<feature type="compositionally biased region" description="Basic and acidic residues" evidence="2">
    <location>
        <begin position="54"/>
        <end position="68"/>
    </location>
</feature>
<feature type="compositionally biased region" description="Basic residues" evidence="2">
    <location>
        <begin position="74"/>
        <end position="83"/>
    </location>
</feature>
<feature type="binding site" evidence="1">
    <location>
        <begin position="150"/>
        <end position="157"/>
    </location>
    <ligand>
        <name>ATP</name>
        <dbReference type="ChEBI" id="CHEBI:30616"/>
    </ligand>
</feature>
<comment type="similarity">
    <text evidence="3">Belongs to the ABC transporter superfamily.</text>
</comment>
<name>Y683_MYCPN</name>
<reference key="1">
    <citation type="journal article" date="1996" name="Nucleic Acids Res.">
        <title>Complete sequence analysis of the genome of the bacterium Mycoplasma pneumoniae.</title>
        <authorList>
            <person name="Himmelreich R."/>
            <person name="Hilbert H."/>
            <person name="Plagens H."/>
            <person name="Pirkl E."/>
            <person name="Li B.-C."/>
            <person name="Herrmann R."/>
        </authorList>
    </citation>
    <scope>NUCLEOTIDE SEQUENCE [LARGE SCALE GENOMIC DNA]</scope>
    <source>
        <strain>ATCC 29342 / M129 / Subtype 1</strain>
    </source>
</reference>
<accession>P75110</accession>
<protein>
    <recommendedName>
        <fullName>Putative ABC transporter ATP-binding protein MG467 homolog</fullName>
    </recommendedName>
</protein>
<proteinExistence type="inferred from homology"/>